<sequence length="194" mass="22559">MGMYKYIREAWKSPKKSYVGELLKKRMIKWRREPVVVRIERPTRLDRARSLGYQAKQGYVVVRVRVRRGGRKRPRWKGGRKPSKMGMVKYSPKKSLQWIAEEKAARKFPNLEVLNSYWVGEDGMYKWFEVIMVDPHHPVIKSDPKIAWITGKAHKGRVFRGLTSAGKKGRGLRNKGKGAEKVRPSVRANKGKTK</sequence>
<comment type="similarity">
    <text evidence="1">Belongs to the eukaryotic ribosomal protein eL15 family.</text>
</comment>
<keyword id="KW-1185">Reference proteome</keyword>
<keyword id="KW-0687">Ribonucleoprotein</keyword>
<keyword id="KW-0689">Ribosomal protein</keyword>
<dbReference type="EMBL" id="CP001398">
    <property type="protein sequence ID" value="ACS34302.1"/>
    <property type="molecule type" value="Genomic_DNA"/>
</dbReference>
<dbReference type="RefSeq" id="WP_015859411.1">
    <property type="nucleotide sequence ID" value="NC_012804.1"/>
</dbReference>
<dbReference type="SMR" id="C5A1N3"/>
<dbReference type="STRING" id="593117.TGAM_1800"/>
<dbReference type="PaxDb" id="593117-TGAM_1800"/>
<dbReference type="GeneID" id="7987627"/>
<dbReference type="KEGG" id="tga:TGAM_1800"/>
<dbReference type="PATRIC" id="fig|593117.10.peg.1808"/>
<dbReference type="eggNOG" id="arCOG04209">
    <property type="taxonomic scope" value="Archaea"/>
</dbReference>
<dbReference type="HOGENOM" id="CLU_080796_1_0_2"/>
<dbReference type="OrthoDB" id="8183at2157"/>
<dbReference type="Proteomes" id="UP000001488">
    <property type="component" value="Chromosome"/>
</dbReference>
<dbReference type="GO" id="GO:0022625">
    <property type="term" value="C:cytosolic large ribosomal subunit"/>
    <property type="evidence" value="ECO:0007669"/>
    <property type="project" value="TreeGrafter"/>
</dbReference>
<dbReference type="GO" id="GO:0003723">
    <property type="term" value="F:RNA binding"/>
    <property type="evidence" value="ECO:0007669"/>
    <property type="project" value="TreeGrafter"/>
</dbReference>
<dbReference type="GO" id="GO:0003735">
    <property type="term" value="F:structural constituent of ribosome"/>
    <property type="evidence" value="ECO:0007669"/>
    <property type="project" value="InterPro"/>
</dbReference>
<dbReference type="GO" id="GO:0002181">
    <property type="term" value="P:cytoplasmic translation"/>
    <property type="evidence" value="ECO:0007669"/>
    <property type="project" value="TreeGrafter"/>
</dbReference>
<dbReference type="FunFam" id="3.40.1120.10:FF:000002">
    <property type="entry name" value="50S ribosomal protein L15e"/>
    <property type="match status" value="1"/>
</dbReference>
<dbReference type="Gene3D" id="3.40.1120.10">
    <property type="entry name" value="Ribosomal protein l15e"/>
    <property type="match status" value="1"/>
</dbReference>
<dbReference type="HAMAP" id="MF_00256">
    <property type="entry name" value="Ribosomal_eL15"/>
    <property type="match status" value="1"/>
</dbReference>
<dbReference type="InterPro" id="IPR024794">
    <property type="entry name" value="Rbsml_eL15_core_dom_sf"/>
</dbReference>
<dbReference type="InterPro" id="IPR000439">
    <property type="entry name" value="Ribosomal_eL15"/>
</dbReference>
<dbReference type="InterPro" id="IPR020926">
    <property type="entry name" value="Ribosomal_eL15_arc"/>
</dbReference>
<dbReference type="InterPro" id="IPR020925">
    <property type="entry name" value="Ribosomal_eL15_CS"/>
</dbReference>
<dbReference type="InterPro" id="IPR012678">
    <property type="entry name" value="Ribosomal_uL23/eL15/eS24_sf"/>
</dbReference>
<dbReference type="NCBIfam" id="NF003269">
    <property type="entry name" value="PRK04243.1"/>
    <property type="match status" value="1"/>
</dbReference>
<dbReference type="PANTHER" id="PTHR11847:SF4">
    <property type="entry name" value="LARGE RIBOSOMAL SUBUNIT PROTEIN EL15"/>
    <property type="match status" value="1"/>
</dbReference>
<dbReference type="PANTHER" id="PTHR11847">
    <property type="entry name" value="RIBOSOMAL PROTEIN L15"/>
    <property type="match status" value="1"/>
</dbReference>
<dbReference type="Pfam" id="PF00827">
    <property type="entry name" value="Ribosomal_L15e"/>
    <property type="match status" value="1"/>
</dbReference>
<dbReference type="SMART" id="SM01384">
    <property type="entry name" value="Ribosomal_L15e"/>
    <property type="match status" value="1"/>
</dbReference>
<dbReference type="SUPFAM" id="SSF54189">
    <property type="entry name" value="Ribosomal proteins S24e, L23 and L15e"/>
    <property type="match status" value="1"/>
</dbReference>
<dbReference type="PROSITE" id="PS01194">
    <property type="entry name" value="RIBOSOMAL_L15E"/>
    <property type="match status" value="1"/>
</dbReference>
<reference key="1">
    <citation type="journal article" date="2007" name="Genome Biol.">
        <title>Genome analysis and genome-wide proteomics of Thermococcus gammatolerans, the most radioresistant organism known amongst the Archaea.</title>
        <authorList>
            <person name="Zivanovic Y."/>
            <person name="Armengaud J."/>
            <person name="Lagorce A."/>
            <person name="Leplat C."/>
            <person name="Guerin P."/>
            <person name="Dutertre M."/>
            <person name="Anthouard V."/>
            <person name="Forterre P."/>
            <person name="Wincker P."/>
            <person name="Confalonieri F."/>
        </authorList>
    </citation>
    <scope>NUCLEOTIDE SEQUENCE [LARGE SCALE GENOMIC DNA]</scope>
    <source>
        <strain>DSM 15229 / JCM 11827 / EJ3</strain>
    </source>
</reference>
<evidence type="ECO:0000255" key="1">
    <source>
        <dbReference type="HAMAP-Rule" id="MF_00256"/>
    </source>
</evidence>
<evidence type="ECO:0000256" key="2">
    <source>
        <dbReference type="SAM" id="MobiDB-lite"/>
    </source>
</evidence>
<evidence type="ECO:0000305" key="3"/>
<proteinExistence type="inferred from homology"/>
<name>RL15E_THEGJ</name>
<feature type="chain" id="PRO_1000204620" description="Large ribosomal subunit protein eL15">
    <location>
        <begin position="1"/>
        <end position="194"/>
    </location>
</feature>
<feature type="region of interest" description="Disordered" evidence="2">
    <location>
        <begin position="164"/>
        <end position="194"/>
    </location>
</feature>
<feature type="compositionally biased region" description="Basic residues" evidence="2">
    <location>
        <begin position="167"/>
        <end position="176"/>
    </location>
</feature>
<accession>C5A1N3</accession>
<protein>
    <recommendedName>
        <fullName evidence="1">Large ribosomal subunit protein eL15</fullName>
    </recommendedName>
    <alternativeName>
        <fullName evidence="3">50S ribosomal protein L15e</fullName>
    </alternativeName>
</protein>
<gene>
    <name evidence="1" type="primary">rpl15e</name>
    <name type="ordered locus">TGAM_1800</name>
</gene>
<organism>
    <name type="scientific">Thermococcus gammatolerans (strain DSM 15229 / JCM 11827 / EJ3)</name>
    <dbReference type="NCBI Taxonomy" id="593117"/>
    <lineage>
        <taxon>Archaea</taxon>
        <taxon>Methanobacteriati</taxon>
        <taxon>Methanobacteriota</taxon>
        <taxon>Thermococci</taxon>
        <taxon>Thermococcales</taxon>
        <taxon>Thermococcaceae</taxon>
        <taxon>Thermococcus</taxon>
    </lineage>
</organism>